<evidence type="ECO:0000255" key="1">
    <source>
        <dbReference type="PROSITE-ProRule" id="PRU00541"/>
    </source>
</evidence>
<evidence type="ECO:0000255" key="2">
    <source>
        <dbReference type="PROSITE-ProRule" id="PRU00542"/>
    </source>
</evidence>
<evidence type="ECO:0000305" key="3"/>
<gene>
    <name type="primary">helY</name>
    <name type="ordered locus">MT2153</name>
</gene>
<sequence>MTELAELDRFTAELPFSLDDFQQRACSALERGHGVLVCAPTGAGKTVVGEFAVHLALAAGSKCFYTTPLKALSNQKHTDLTARYGRDQIGLLTGDLSVNGNAPVVVMTTEVLRNMLYADSPALQGLSYVVMDEVHFLADRMRGPVWEEVILQLPDDVRVVSLSATVSNAEEFGGWIQTVRGDTTVVVDEHRPVPLWQHVLVGKRMFDLFDYRIGEAEGQPQVNRELLRHIAHRREADRMADWQPRRRGSGRPGFYRPPGRPEVIAKLDAEGLLPAITFVFSRAGCDAAVTQCLRSPLRLTSEEERARIAEVIDHRCGDLADSDLAVLGYYEWREGLLRGLAAHHAGMLPAFRHTVEELFTAGLVKAVFATETLALGINMPARTVVLERLVKFNGEQHMPLTPGEYTQLTGRAGRRGIDVEGHAVVIWHPEIEPSEVAGLASTRTFPLRSSFAPSYNMTINLVHRMGPQQAHRLLEQSFAQYQADRSVVGLVRGIERGNRILGEIAAELGGSDAPILEYARLRARVSELERAQARASRLQRRQAATDALAALRRGDIITITHGRRGGLAVVLESARDRDDPRPLVLTEHRWAGRISSADYSGTTPVGSMTLPKRVEHRQPRVRRDLASALRSAAAGLVIPAARRVSEAGGFHDPELESSREQLRRHPVHTSPGLEDQIRQAERYLRIERDNAQLERKVAAATNSLARTFDRFVGLLTEREFIDGPATDPVVTDDGRLLARIYSESDLLVAECLRTGAWEGLKPAELAGVVSAVVYETRGGDGQGAPFGADVPTPRLRQALTQTSRLSTTLRADEQAHRITPSREPDDGFVRVIYRWSRTGDLAAALAAADVNGSGSPLLAGDFVRWCRQVLDLLDQVRNAAPNPELRATAKRAIGDIRRGVVAVDAG</sequence>
<reference key="1">
    <citation type="journal article" date="2002" name="J. Bacteriol.">
        <title>Whole-genome comparison of Mycobacterium tuberculosis clinical and laboratory strains.</title>
        <authorList>
            <person name="Fleischmann R.D."/>
            <person name="Alland D."/>
            <person name="Eisen J.A."/>
            <person name="Carpenter L."/>
            <person name="White O."/>
            <person name="Peterson J.D."/>
            <person name="DeBoy R.T."/>
            <person name="Dodson R.J."/>
            <person name="Gwinn M.L."/>
            <person name="Haft D.H."/>
            <person name="Hickey E.K."/>
            <person name="Kolonay J.F."/>
            <person name="Nelson W.C."/>
            <person name="Umayam L.A."/>
            <person name="Ermolaeva M.D."/>
            <person name="Salzberg S.L."/>
            <person name="Delcher A."/>
            <person name="Utterback T.R."/>
            <person name="Weidman J.F."/>
            <person name="Khouri H.M."/>
            <person name="Gill J."/>
            <person name="Mikula A."/>
            <person name="Bishai W."/>
            <person name="Jacobs W.R. Jr."/>
            <person name="Venter J.C."/>
            <person name="Fraser C.M."/>
        </authorList>
    </citation>
    <scope>NUCLEOTIDE SEQUENCE [LARGE SCALE GENOMIC DNA]</scope>
    <source>
        <strain>CDC 1551 / Oshkosh</strain>
    </source>
</reference>
<organism>
    <name type="scientific">Mycobacterium tuberculosis (strain CDC 1551 / Oshkosh)</name>
    <dbReference type="NCBI Taxonomy" id="83331"/>
    <lineage>
        <taxon>Bacteria</taxon>
        <taxon>Bacillati</taxon>
        <taxon>Actinomycetota</taxon>
        <taxon>Actinomycetes</taxon>
        <taxon>Mycobacteriales</taxon>
        <taxon>Mycobacteriaceae</taxon>
        <taxon>Mycobacterium</taxon>
        <taxon>Mycobacterium tuberculosis complex</taxon>
    </lineage>
</organism>
<name>HELY_MYCTO</name>
<accession>P9WMR0</accession>
<accession>L0T8N1</accession>
<accession>Q10701</accession>
<keyword id="KW-0067">ATP-binding</keyword>
<keyword id="KW-0347">Helicase</keyword>
<keyword id="KW-0378">Hydrolase</keyword>
<keyword id="KW-0547">Nucleotide-binding</keyword>
<keyword id="KW-1185">Reference proteome</keyword>
<dbReference type="EC" id="3.6.4.-"/>
<dbReference type="EMBL" id="AE000516">
    <property type="protein sequence ID" value="AAK46434.1"/>
    <property type="molecule type" value="Genomic_DNA"/>
</dbReference>
<dbReference type="PIR" id="G70767">
    <property type="entry name" value="G70767"/>
</dbReference>
<dbReference type="RefSeq" id="WP_003899167.1">
    <property type="nucleotide sequence ID" value="NZ_KK341227.1"/>
</dbReference>
<dbReference type="SMR" id="P9WMR0"/>
<dbReference type="KEGG" id="mtc:MT2153"/>
<dbReference type="PATRIC" id="fig|83331.31.peg.2322"/>
<dbReference type="HOGENOM" id="CLU_002902_4_1_11"/>
<dbReference type="Proteomes" id="UP000001020">
    <property type="component" value="Chromosome"/>
</dbReference>
<dbReference type="GO" id="GO:0055087">
    <property type="term" value="C:Ski complex"/>
    <property type="evidence" value="ECO:0007669"/>
    <property type="project" value="TreeGrafter"/>
</dbReference>
<dbReference type="GO" id="GO:0005524">
    <property type="term" value="F:ATP binding"/>
    <property type="evidence" value="ECO:0007669"/>
    <property type="project" value="UniProtKB-KW"/>
</dbReference>
<dbReference type="GO" id="GO:0004386">
    <property type="term" value="F:helicase activity"/>
    <property type="evidence" value="ECO:0007669"/>
    <property type="project" value="UniProtKB-KW"/>
</dbReference>
<dbReference type="GO" id="GO:0016787">
    <property type="term" value="F:hydrolase activity"/>
    <property type="evidence" value="ECO:0007669"/>
    <property type="project" value="UniProtKB-KW"/>
</dbReference>
<dbReference type="GO" id="GO:0003676">
    <property type="term" value="F:nucleic acid binding"/>
    <property type="evidence" value="ECO:0007669"/>
    <property type="project" value="InterPro"/>
</dbReference>
<dbReference type="GO" id="GO:0070478">
    <property type="term" value="P:nuclear-transcribed mRNA catabolic process, 3'-5' exonucleolytic nonsense-mediated decay"/>
    <property type="evidence" value="ECO:0007669"/>
    <property type="project" value="TreeGrafter"/>
</dbReference>
<dbReference type="CDD" id="cd18795">
    <property type="entry name" value="SF2_C_Ski2"/>
    <property type="match status" value="1"/>
</dbReference>
<dbReference type="FunFam" id="1.10.3380.30:FF:000012">
    <property type="entry name" value="Probable helicase HelY"/>
    <property type="match status" value="1"/>
</dbReference>
<dbReference type="Gene3D" id="1.10.3380.30">
    <property type="match status" value="1"/>
</dbReference>
<dbReference type="Gene3D" id="3.40.50.300">
    <property type="entry name" value="P-loop containing nucleotide triphosphate hydrolases"/>
    <property type="match status" value="2"/>
</dbReference>
<dbReference type="InterPro" id="IPR011545">
    <property type="entry name" value="DEAD/DEAH_box_helicase_dom"/>
</dbReference>
<dbReference type="InterPro" id="IPR014001">
    <property type="entry name" value="Helicase_ATP-bd"/>
</dbReference>
<dbReference type="InterPro" id="IPR001650">
    <property type="entry name" value="Helicase_C-like"/>
</dbReference>
<dbReference type="InterPro" id="IPR027417">
    <property type="entry name" value="P-loop_NTPase"/>
</dbReference>
<dbReference type="InterPro" id="IPR050699">
    <property type="entry name" value="RNA-DNA_Helicase"/>
</dbReference>
<dbReference type="InterPro" id="IPR012961">
    <property type="entry name" value="Ski2/MTR4_C"/>
</dbReference>
<dbReference type="PANTHER" id="PTHR12131">
    <property type="entry name" value="ATP-DEPENDENT RNA AND DNA HELICASE"/>
    <property type="match status" value="1"/>
</dbReference>
<dbReference type="PANTHER" id="PTHR12131:SF1">
    <property type="entry name" value="ATP-DEPENDENT RNA HELICASE SUPV3L1, MITOCHONDRIAL-RELATED"/>
    <property type="match status" value="1"/>
</dbReference>
<dbReference type="Pfam" id="PF00270">
    <property type="entry name" value="DEAD"/>
    <property type="match status" value="1"/>
</dbReference>
<dbReference type="Pfam" id="PF08148">
    <property type="entry name" value="DSHCT"/>
    <property type="match status" value="1"/>
</dbReference>
<dbReference type="Pfam" id="PF00271">
    <property type="entry name" value="Helicase_C"/>
    <property type="match status" value="1"/>
</dbReference>
<dbReference type="SMART" id="SM00487">
    <property type="entry name" value="DEXDc"/>
    <property type="match status" value="1"/>
</dbReference>
<dbReference type="SMART" id="SM01142">
    <property type="entry name" value="DSHCT"/>
    <property type="match status" value="1"/>
</dbReference>
<dbReference type="SMART" id="SM00490">
    <property type="entry name" value="HELICc"/>
    <property type="match status" value="1"/>
</dbReference>
<dbReference type="SUPFAM" id="SSF52540">
    <property type="entry name" value="P-loop containing nucleoside triphosphate hydrolases"/>
    <property type="match status" value="1"/>
</dbReference>
<dbReference type="PROSITE" id="PS51192">
    <property type="entry name" value="HELICASE_ATP_BIND_1"/>
    <property type="match status" value="1"/>
</dbReference>
<dbReference type="PROSITE" id="PS51194">
    <property type="entry name" value="HELICASE_CTER"/>
    <property type="match status" value="1"/>
</dbReference>
<proteinExistence type="inferred from homology"/>
<feature type="chain" id="PRO_0000427260" description="Probable helicase HelY">
    <location>
        <begin position="1"/>
        <end position="906"/>
    </location>
</feature>
<feature type="domain" description="Helicase ATP-binding" evidence="1">
    <location>
        <begin position="26"/>
        <end position="184"/>
    </location>
</feature>
<feature type="domain" description="Helicase C-terminal" evidence="2">
    <location>
        <begin position="259"/>
        <end position="463"/>
    </location>
</feature>
<feature type="short sequence motif" description="DEVH box">
    <location>
        <begin position="132"/>
        <end position="135"/>
    </location>
</feature>
<feature type="binding site" evidence="1">
    <location>
        <begin position="39"/>
        <end position="46"/>
    </location>
    <ligand>
        <name>ATP</name>
        <dbReference type="ChEBI" id="CHEBI:30616"/>
    </ligand>
</feature>
<comment type="similarity">
    <text evidence="3">Belongs to the helicase family. SKI2 subfamily.</text>
</comment>
<protein>
    <recommendedName>
        <fullName>Probable helicase HelY</fullName>
        <ecNumber>3.6.4.-</ecNumber>
    </recommendedName>
</protein>